<protein>
    <recommendedName>
        <fullName>Hemagglutinin</fullName>
    </recommendedName>
    <component>
        <recommendedName>
            <fullName>Hemagglutinin HA1 chain</fullName>
        </recommendedName>
    </component>
</protein>
<name>HEMA_I78AE</name>
<organismHost>
    <name type="scientific">Aves</name>
    <dbReference type="NCBI Taxonomy" id="8782"/>
</organismHost>
<feature type="signal peptide" evidence="2">
    <location>
        <begin position="1"/>
        <end position="16"/>
    </location>
</feature>
<feature type="chain" id="PRO_0000038942" description="Hemagglutinin HA1 chain">
    <location>
        <begin position="17"/>
        <end position="100" status="greater than"/>
    </location>
</feature>
<feature type="glycosylation site" description="N-linked (GlcNAc...) asparagine; by host" evidence="2">
    <location>
        <position position="26"/>
    </location>
</feature>
<feature type="glycosylation site" description="N-linked (GlcNAc...) asparagine; by host" evidence="2">
    <location>
        <position position="27"/>
    </location>
</feature>
<feature type="glycosylation site" description="N-linked (GlcNAc...) asparagine; by host" evidence="2">
    <location>
        <position position="39"/>
    </location>
</feature>
<feature type="non-terminal residue">
    <location>
        <position position="100"/>
    </location>
</feature>
<proteinExistence type="inferred from homology"/>
<sequence length="100" mass="10960">MKKILLFTVIFLYAKADEICIGYLSNNSTDKVDTIIESNVTVTSSVELVETEHTGSFCSINGKQPISLGDCSFAGWILGNPMCDDLIGKTSWSYIVENQS</sequence>
<reference key="1">
    <citation type="journal article" date="1981" name="Proc. Natl. Acad. Sci. U.S.A.">
        <title>Sequence relationships among the hemagglutinin genes of 12 subtypes of influenza A virus.</title>
        <authorList>
            <person name="Air G.M."/>
        </authorList>
    </citation>
    <scope>NUCLEOTIDE SEQUENCE [GENOMIC RNA]</scope>
</reference>
<comment type="function">
    <text>Binds to sialic acid-containing receptors on the cell surface, bringing about the attachment of the virus particle to the cell. This attachment induces virion internalization of about two third of the virus particles through clathrin-dependent endocytosis and about one third through a clathrin- and caveolin-independent pathway. Plays a major role in the determination of host range restriction and virulence. Class I viral fusion protein. Responsible for penetration of the virus into the cell cytoplasm by mediating the fusion of the membrane of the endocytosed virus particle with the endosomal membrane. Low pH in endosomes induces an irreversible conformational change in HA2, releasing the fusion hydrophobic peptide. Several trimers are required to form a competent fusion pore.</text>
</comment>
<comment type="subunit">
    <text>Homotrimer of disulfide-linked HA1-HA2.</text>
</comment>
<comment type="subcellular location">
    <subcellularLocation>
        <location evidence="3">Virion membrane</location>
        <topology evidence="3">Single-pass type I membrane protein</topology>
    </subcellularLocation>
    <subcellularLocation>
        <location>Host apical cell membrane</location>
        <topology>Single-pass type I membrane protein</topology>
    </subcellularLocation>
    <text>Targeted to the apical plasma membrane in epithelial polarized cells through a signal present in the transmembrane domain. Associated with glycosphingolipid- and cholesterol-enriched detergent-resistant lipid rafts.</text>
</comment>
<comment type="PTM">
    <text evidence="1">In natural infection, inactive HA is matured into HA1 and HA2 outside the cell by one or more trypsin-like, arginine-specific endoprotease secreted by the bronchial epithelial cells. One identified protease that may be involved in this process is secreted in lungs by club cells (By similarity).</text>
</comment>
<comment type="PTM">
    <text evidence="1">Palmitoylated.</text>
</comment>
<comment type="miscellaneous">
    <text>Major glycoprotein, comprises over 80% of the envelope proteins present in virus particle.</text>
</comment>
<comment type="miscellaneous">
    <text>The extent of infection into host organism is determined by HA. Influenza viruses bud from the apical surface of polarized epithelial cells (e.g. bronchial epithelial cells) into lumen of lungs and are therefore usually pneumotropic. The reason is that HA is cleaved by tryptase clara which is restricted to lungs. However, HAs of H5 and H7 pantropic avian viruses subtypes can be cleaved by furin and subtilisin-type enzymes, allowing the virus to grow in other organs than lungs.</text>
</comment>
<comment type="miscellaneous">
    <text>The influenza A genome consist of 8 RNA segments. Genetic variation of hemagglutinin and/or neuraminidase genes results in the emergence of new influenza strains. The mechanism of variation can be the result of point mutations or the result of genetic reassortment between segments of two different strains.</text>
</comment>
<comment type="similarity">
    <text evidence="3">Belongs to the influenza viruses hemagglutinin family.</text>
</comment>
<dbReference type="EMBL" id="J02106">
    <property type="protein sequence ID" value="AAA43191.1"/>
    <property type="molecule type" value="Genomic_RNA"/>
</dbReference>
<dbReference type="SMR" id="P04660"/>
<dbReference type="GlyCosmos" id="P04660">
    <property type="glycosylation" value="3 sites, No reported glycans"/>
</dbReference>
<dbReference type="GO" id="GO:0020002">
    <property type="term" value="C:host cell plasma membrane"/>
    <property type="evidence" value="ECO:0007669"/>
    <property type="project" value="UniProtKB-SubCell"/>
</dbReference>
<dbReference type="GO" id="GO:0016020">
    <property type="term" value="C:membrane"/>
    <property type="evidence" value="ECO:0007669"/>
    <property type="project" value="UniProtKB-KW"/>
</dbReference>
<dbReference type="GO" id="GO:0019031">
    <property type="term" value="C:viral envelope"/>
    <property type="evidence" value="ECO:0007669"/>
    <property type="project" value="UniProtKB-KW"/>
</dbReference>
<dbReference type="GO" id="GO:0055036">
    <property type="term" value="C:virion membrane"/>
    <property type="evidence" value="ECO:0007669"/>
    <property type="project" value="UniProtKB-SubCell"/>
</dbReference>
<dbReference type="GO" id="GO:0046789">
    <property type="term" value="F:host cell surface receptor binding"/>
    <property type="evidence" value="ECO:0007669"/>
    <property type="project" value="InterPro"/>
</dbReference>
<dbReference type="GO" id="GO:0075512">
    <property type="term" value="P:clathrin-dependent endocytosis of virus by host cell"/>
    <property type="evidence" value="ECO:0007669"/>
    <property type="project" value="UniProtKB-KW"/>
</dbReference>
<dbReference type="GO" id="GO:0039654">
    <property type="term" value="P:fusion of virus membrane with host endosome membrane"/>
    <property type="evidence" value="ECO:0007669"/>
    <property type="project" value="UniProtKB-KW"/>
</dbReference>
<dbReference type="GO" id="GO:0019064">
    <property type="term" value="P:fusion of virus membrane with host plasma membrane"/>
    <property type="evidence" value="ECO:0007669"/>
    <property type="project" value="InterPro"/>
</dbReference>
<dbReference type="GO" id="GO:0019062">
    <property type="term" value="P:virion attachment to host cell"/>
    <property type="evidence" value="ECO:0007669"/>
    <property type="project" value="UniProtKB-KW"/>
</dbReference>
<dbReference type="Gene3D" id="3.90.209.20">
    <property type="match status" value="1"/>
</dbReference>
<dbReference type="Gene3D" id="2.10.77.10">
    <property type="entry name" value="Hemagglutinin Chain A, Domain 2"/>
    <property type="match status" value="1"/>
</dbReference>
<dbReference type="InterPro" id="IPR008980">
    <property type="entry name" value="Capsid_hemagglutn"/>
</dbReference>
<dbReference type="InterPro" id="IPR013828">
    <property type="entry name" value="Hemagglutn_HA1_a/b_dom_sf"/>
</dbReference>
<dbReference type="InterPro" id="IPR000149">
    <property type="entry name" value="Hemagglutn_influenz_A"/>
</dbReference>
<dbReference type="InterPro" id="IPR001364">
    <property type="entry name" value="Hemagglutn_influenz_A/B"/>
</dbReference>
<dbReference type="Pfam" id="PF00509">
    <property type="entry name" value="Hemagglutinin"/>
    <property type="match status" value="1"/>
</dbReference>
<dbReference type="PRINTS" id="PR00330">
    <property type="entry name" value="HEMAGGLUTN1"/>
</dbReference>
<dbReference type="SUPFAM" id="SSF49818">
    <property type="entry name" value="Viral protein domain"/>
    <property type="match status" value="1"/>
</dbReference>
<gene>
    <name type="primary">HA</name>
</gene>
<keyword id="KW-1167">Clathrin- and caveolin-independent endocytosis of virus by host</keyword>
<keyword id="KW-1165">Clathrin-mediated endocytosis of virus by host</keyword>
<keyword id="KW-1015">Disulfide bond</keyword>
<keyword id="KW-1170">Fusion of virus membrane with host endosomal membrane</keyword>
<keyword id="KW-1168">Fusion of virus membrane with host membrane</keyword>
<keyword id="KW-0325">Glycoprotein</keyword>
<keyword id="KW-0348">Hemagglutinin</keyword>
<keyword id="KW-1032">Host cell membrane</keyword>
<keyword id="KW-1043">Host membrane</keyword>
<keyword id="KW-0945">Host-virus interaction</keyword>
<keyword id="KW-0449">Lipoprotein</keyword>
<keyword id="KW-0472">Membrane</keyword>
<keyword id="KW-0564">Palmitate</keyword>
<keyword id="KW-0732">Signal</keyword>
<keyword id="KW-0812">Transmembrane</keyword>
<keyword id="KW-1161">Viral attachment to host cell</keyword>
<keyword id="KW-0261">Viral envelope protein</keyword>
<keyword id="KW-1162">Viral penetration into host cytoplasm</keyword>
<keyword id="KW-0946">Virion</keyword>
<keyword id="KW-1164">Virus endocytosis by host</keyword>
<keyword id="KW-1160">Virus entry into host cell</keyword>
<accession>P04660</accession>
<evidence type="ECO:0000250" key="1"/>
<evidence type="ECO:0000255" key="2"/>
<evidence type="ECO:0000305" key="3"/>
<organism>
    <name type="scientific">Influenza A virus (strain A/Duck/New York/12/1978 H11N6)</name>
    <dbReference type="NCBI Taxonomy" id="11369"/>
    <lineage>
        <taxon>Viruses</taxon>
        <taxon>Riboviria</taxon>
        <taxon>Orthornavirae</taxon>
        <taxon>Negarnaviricota</taxon>
        <taxon>Polyploviricotina</taxon>
        <taxon>Insthoviricetes</taxon>
        <taxon>Articulavirales</taxon>
        <taxon>Orthomyxoviridae</taxon>
        <taxon>Alphainfluenzavirus</taxon>
        <taxon>Alphainfluenzavirus influenzae</taxon>
        <taxon>Influenza A virus</taxon>
    </lineage>
</organism>